<gene>
    <name type="primary">yagE</name>
    <name type="ordered locus">b0268</name>
    <name type="ordered locus">JW0261</name>
</gene>
<accession>P75682</accession>
<accession>Q9R2D5</accession>
<name>YAGE_ECOLI</name>
<reference key="1">
    <citation type="journal article" date="1997" name="Science">
        <title>The complete genome sequence of Escherichia coli K-12.</title>
        <authorList>
            <person name="Blattner F.R."/>
            <person name="Plunkett G. III"/>
            <person name="Bloch C.A."/>
            <person name="Perna N.T."/>
            <person name="Burland V."/>
            <person name="Riley M."/>
            <person name="Collado-Vides J."/>
            <person name="Glasner J.D."/>
            <person name="Rode C.K."/>
            <person name="Mayhew G.F."/>
            <person name="Gregor J."/>
            <person name="Davis N.W."/>
            <person name="Kirkpatrick H.A."/>
            <person name="Goeden M.A."/>
            <person name="Rose D.J."/>
            <person name="Mau B."/>
            <person name="Shao Y."/>
        </authorList>
    </citation>
    <scope>NUCLEOTIDE SEQUENCE [LARGE SCALE GENOMIC DNA]</scope>
    <source>
        <strain>K12 / MG1655 / ATCC 47076</strain>
    </source>
</reference>
<reference key="2">
    <citation type="journal article" date="2006" name="Mol. Syst. Biol.">
        <title>Highly accurate genome sequences of Escherichia coli K-12 strains MG1655 and W3110.</title>
        <authorList>
            <person name="Hayashi K."/>
            <person name="Morooka N."/>
            <person name="Yamamoto Y."/>
            <person name="Fujita K."/>
            <person name="Isono K."/>
            <person name="Choi S."/>
            <person name="Ohtsubo E."/>
            <person name="Baba T."/>
            <person name="Wanner B.L."/>
            <person name="Mori H."/>
            <person name="Horiuchi T."/>
        </authorList>
    </citation>
    <scope>NUCLEOTIDE SEQUENCE [LARGE SCALE GENOMIC DNA]</scope>
    <scope>SEQUENCE REVISION TO 99-100</scope>
    <source>
        <strain>K12 / W3110 / ATCC 27325 / DSM 5911</strain>
    </source>
</reference>
<reference key="3">
    <citation type="submission" date="1996-02" db="EMBL/GenBank/DDBJ databases">
        <title>Systematic sequencing of the Escherichia coli genome: analysis of the 4.0 - 6.0 min (189,987 - 281,416bp) region.</title>
        <authorList>
            <person name="Takemoto K."/>
            <person name="Mori H."/>
            <person name="Murayama N."/>
            <person name="Kataoka K."/>
            <person name="Yano M."/>
            <person name="Itoh T."/>
            <person name="Yamamoto Y."/>
            <person name="Inokuchi H."/>
            <person name="Miki T."/>
            <person name="Hatada E."/>
            <person name="Fukuda R."/>
            <person name="Ichihara S."/>
            <person name="Mizuno T."/>
            <person name="Makino K."/>
            <person name="Nakata A."/>
            <person name="Yura T."/>
            <person name="Sampei G."/>
            <person name="Mizobuchi K."/>
        </authorList>
    </citation>
    <scope>NUCLEOTIDE SEQUENCE [LARGE SCALE GENOMIC DNA] OF 1-121</scope>
    <source>
        <strain>K12 / W3110 / ATCC 27325 / DSM 5911</strain>
    </source>
</reference>
<reference key="4">
    <citation type="journal article" date="2013" name="Appl. Microbiol. Biotechnol.">
        <title>Biosynthesis of ethylene glycol in Escherichia coli.</title>
        <authorList>
            <person name="Liu H."/>
            <person name="Ramos K.R."/>
            <person name="Valdehuesa K.N."/>
            <person name="Nisola G.M."/>
            <person name="Lee W.K."/>
            <person name="Chung W.J."/>
        </authorList>
    </citation>
    <scope>FUNCTION</scope>
    <scope>CATALYTIC ACTIVITY</scope>
    <scope>DISRUPTION PHENOTYPE</scope>
    <source>
        <strain>K12 / W3110 / ATCC 27325 / DSM 5911</strain>
    </source>
</reference>
<reference key="5">
    <citation type="journal article" date="2017" name="FEMS Microbiol. Lett.">
        <title>Regulatory role of XynR (YagI) in catabolism of xylonate in Escherichia coli K-12.</title>
        <authorList>
            <person name="Shimada T."/>
            <person name="Momiyama E."/>
            <person name="Yamanaka Y."/>
            <person name="Watanabe H."/>
            <person name="Yamamoto K."/>
            <person name="Ishihama A."/>
        </authorList>
    </citation>
    <scope>INDUCTION</scope>
</reference>
<reference key="6">
    <citation type="journal article" date="2008" name="Proteins">
        <title>Crystal structure of YagE, a putative DHDPS-like protein from Escherichia coli K12.</title>
        <authorList>
            <person name="Manicka S."/>
            <person name="Peleg Y."/>
            <person name="Unger T."/>
            <person name="Albeck S."/>
            <person name="Dym O."/>
            <person name="Greenblatt H.M."/>
            <person name="Bourenkov G."/>
            <person name="Lamzin V."/>
            <person name="Krishnaswamy S."/>
            <person name="Sussman J.L."/>
        </authorList>
    </citation>
    <scope>X-RAY CRYSTALLOGRAPHY (2.15 ANGSTROMS) OF APO-FORM</scope>
    <scope>SUBUNIT</scope>
</reference>
<reference key="7">
    <citation type="journal article" date="2011" name="Proteins">
        <title>Identification of biochemical and putative biological role of a xenolog from Escherichia coli using structural analysis.</title>
        <authorList>
            <person name="Bhaskar V."/>
            <person name="Kumar M."/>
            <person name="Manicka S."/>
            <person name="Tripathi S."/>
            <person name="Venkatraman A."/>
            <person name="Krishnaswamy S."/>
        </authorList>
    </citation>
    <scope>X-RAY CRYSTALLOGRAPHY (2.19 ANGSTROMS) OF 5-302 IN COMPLEX WITH PYRUVATE OR 2-KETO-3-DEOXY-GALACTONATE</scope>
    <scope>FUNCTION</scope>
    <scope>CATALYTIC ACTIVITY</scope>
    <scope>SUBUNIT</scope>
    <scope>ACTIVE SITE</scope>
</reference>
<feature type="chain" id="PRO_0000103244" description="Putative 2-dehydro-3-deoxy-D-gluconate aldolase YagE">
    <location>
        <begin position="1"/>
        <end position="302"/>
    </location>
</feature>
<feature type="active site" description="Charge relay system" evidence="6">
    <location>
        <position position="49"/>
    </location>
</feature>
<feature type="active site" description="Charge relay system" evidence="6">
    <location>
        <position position="112"/>
    </location>
</feature>
<feature type="active site" description="Proton donor" evidence="6">
    <location>
        <position position="138"/>
    </location>
</feature>
<feature type="active site" description="Schiff-base intermediate with substrate" evidence="6">
    <location>
        <position position="167"/>
    </location>
</feature>
<feature type="strand" evidence="8">
    <location>
        <begin position="22"/>
        <end position="24"/>
    </location>
</feature>
<feature type="helix" evidence="9">
    <location>
        <begin position="26"/>
        <end position="38"/>
    </location>
</feature>
<feature type="strand" evidence="9">
    <location>
        <begin position="44"/>
        <end position="48"/>
    </location>
</feature>
<feature type="helix" evidence="9">
    <location>
        <begin position="49"/>
        <end position="51"/>
    </location>
</feature>
<feature type="helix" evidence="9">
    <location>
        <begin position="53"/>
        <end position="55"/>
    </location>
</feature>
<feature type="helix" evidence="9">
    <location>
        <begin position="58"/>
        <end position="72"/>
    </location>
</feature>
<feature type="strand" evidence="9">
    <location>
        <begin position="78"/>
        <end position="81"/>
    </location>
</feature>
<feature type="helix" evidence="9">
    <location>
        <begin position="87"/>
        <end position="99"/>
    </location>
</feature>
<feature type="strand" evidence="9">
    <location>
        <begin position="103"/>
        <end position="108"/>
    </location>
</feature>
<feature type="strand" evidence="9">
    <location>
        <begin position="111"/>
        <end position="113"/>
    </location>
</feature>
<feature type="helix" evidence="9">
    <location>
        <begin position="117"/>
        <end position="129"/>
    </location>
</feature>
<feature type="strand" evidence="9">
    <location>
        <begin position="135"/>
        <end position="139"/>
    </location>
</feature>
<feature type="helix" evidence="9">
    <location>
        <begin position="141"/>
        <end position="144"/>
    </location>
</feature>
<feature type="helix" evidence="9">
    <location>
        <begin position="150"/>
        <end position="159"/>
    </location>
</feature>
<feature type="strand" evidence="9">
    <location>
        <begin position="163"/>
        <end position="168"/>
    </location>
</feature>
<feature type="helix" evidence="9">
    <location>
        <begin position="173"/>
        <end position="186"/>
    </location>
</feature>
<feature type="strand" evidence="9">
    <location>
        <begin position="191"/>
        <end position="196"/>
    </location>
</feature>
<feature type="helix" evidence="9">
    <location>
        <begin position="197"/>
        <end position="199"/>
    </location>
</feature>
<feature type="helix" evidence="9">
    <location>
        <begin position="200"/>
        <end position="205"/>
    </location>
</feature>
<feature type="helix" evidence="9">
    <location>
        <begin position="214"/>
        <end position="216"/>
    </location>
</feature>
<feature type="helix" evidence="9">
    <location>
        <begin position="220"/>
        <end position="232"/>
    </location>
</feature>
<feature type="helix" evidence="9">
    <location>
        <begin position="235"/>
        <end position="247"/>
    </location>
</feature>
<feature type="helix" evidence="9">
    <location>
        <begin position="248"/>
        <end position="254"/>
    </location>
</feature>
<feature type="strand" evidence="9">
    <location>
        <begin position="255"/>
        <end position="257"/>
    </location>
</feature>
<feature type="helix" evidence="9">
    <location>
        <begin position="259"/>
        <end position="268"/>
    </location>
</feature>
<feature type="helix" evidence="9">
    <location>
        <begin position="286"/>
        <end position="298"/>
    </location>
</feature>
<protein>
    <recommendedName>
        <fullName evidence="5">Putative 2-dehydro-3-deoxy-D-gluconate aldolase YagE</fullName>
        <shortName evidence="5">KDG aldolase YagE</shortName>
        <ecNumber evidence="2">4.1.2.51</ecNumber>
    </recommendedName>
    <alternativeName>
        <fullName evidence="5">Putative 2-dehydro-3-deoxy-D-pentonate aldolase YagE</fullName>
        <ecNumber evidence="7">4.1.2.28</ecNumber>
    </alternativeName>
</protein>
<comment type="function">
    <text evidence="2 7">Catalyzes the formation of 2-keto-3-deoxy-gluconate (KDG) from pyruvate and glyceraldehyde (PubMed:21294156). May also function as a 2-dehydro-3-deoxy-D-pentonate aldolase (PubMed:23233208). Overexpression leads to increased growth (over 2 hours) in the presence of the antibiotics norfloxacin, ampicillin and streptomycin (PubMed:21294156).</text>
</comment>
<comment type="catalytic activity">
    <reaction evidence="2">
        <text>2-dehydro-3-deoxy-D-gluconate = D-glyceraldehyde + pyruvate</text>
        <dbReference type="Rhea" id="RHEA:35583"/>
        <dbReference type="ChEBI" id="CHEBI:15361"/>
        <dbReference type="ChEBI" id="CHEBI:17378"/>
        <dbReference type="ChEBI" id="CHEBI:57990"/>
        <dbReference type="EC" id="4.1.2.51"/>
    </reaction>
</comment>
<comment type="catalytic activity">
    <reaction evidence="7">
        <text>2-dehydro-3-deoxy-D-arabinonate = glycolaldehyde + pyruvate</text>
        <dbReference type="Rhea" id="RHEA:20609"/>
        <dbReference type="ChEBI" id="CHEBI:15361"/>
        <dbReference type="ChEBI" id="CHEBI:16699"/>
        <dbReference type="ChEBI" id="CHEBI:17071"/>
        <dbReference type="EC" id="4.1.2.28"/>
    </reaction>
</comment>
<comment type="subunit">
    <text evidence="1 2">A dimer of dimers.</text>
</comment>
<comment type="subcellular location">
    <subcellularLocation>
        <location evidence="5">Cytoplasm</location>
    </subcellularLocation>
</comment>
<comment type="induction">
    <text evidence="4">Expression is repressed by the transcriptional regulator XynR.</text>
</comment>
<comment type="disruption phenotype">
    <text evidence="3">Disruption mutant has reduced ability to catabolize D-xylonic acid. YjhH-yagE double mutant cannot use D-xylonate as the sole source of carbon.</text>
</comment>
<comment type="miscellaneous">
    <text>Part of prophage CP4-6.</text>
</comment>
<comment type="similarity">
    <text evidence="5">Belongs to the DapA family.</text>
</comment>
<comment type="sequence caution" evidence="5">
    <conflict type="erroneous initiation">
        <sequence resource="EMBL-CDS" id="BAA77934"/>
    </conflict>
    <text>Extended N-terminus.</text>
</comment>
<keyword id="KW-0002">3D-structure</keyword>
<keyword id="KW-0963">Cytoplasm</keyword>
<keyword id="KW-0456">Lyase</keyword>
<keyword id="KW-1185">Reference proteome</keyword>
<keyword id="KW-0704">Schiff base</keyword>
<proteinExistence type="evidence at protein level"/>
<sequence>MPQSALFTGIIPPVSTIFTADGQLDKPGTAALIDDLIKAGVDGLFFLGSGGEFSQLGAEERKAIARFAIDHVDRRVPVLIGTGGTNARETIELSQHAQQAGADGIVVINPYYWKVSEANLIRYFEQVADSVTLPVMLYNFPALTGQDLTPALVKTLADSRSNIIGIKDTIDSVAHLRSMIHTVKGAHPHFTVLCGYDDHLFNTLLLGGDGAISASGNFAPQVSVNLLKAWRDGDVAKAAGYHQTLLQIPQMYQLDTPFVNVIKEAIVLCGRPVSTHVLPPASPLDEPRKAQLKTLLQQLKLC</sequence>
<dbReference type="EC" id="4.1.2.51" evidence="2"/>
<dbReference type="EC" id="4.1.2.28" evidence="7"/>
<dbReference type="EMBL" id="U00096">
    <property type="protein sequence ID" value="AAC73371.2"/>
    <property type="molecule type" value="Genomic_DNA"/>
</dbReference>
<dbReference type="EMBL" id="AP009048">
    <property type="protein sequence ID" value="BAA77934.2"/>
    <property type="status" value="ALT_INIT"/>
    <property type="molecule type" value="Genomic_DNA"/>
</dbReference>
<dbReference type="PIR" id="D64752">
    <property type="entry name" value="D64752"/>
</dbReference>
<dbReference type="RefSeq" id="NP_414802.2">
    <property type="nucleotide sequence ID" value="NC_000913.3"/>
</dbReference>
<dbReference type="RefSeq" id="WP_001136613.1">
    <property type="nucleotide sequence ID" value="NZ_LN832404.1"/>
</dbReference>
<dbReference type="PDB" id="2V8Z">
    <property type="method" value="X-ray"/>
    <property type="resolution" value="2.20 A"/>
    <property type="chains" value="A/B/C/D=1-302"/>
</dbReference>
<dbReference type="PDB" id="2V9D">
    <property type="method" value="X-ray"/>
    <property type="resolution" value="2.15 A"/>
    <property type="chains" value="A/B/C/D=1-302"/>
</dbReference>
<dbReference type="PDB" id="3N2X">
    <property type="method" value="X-ray"/>
    <property type="resolution" value="2.20 A"/>
    <property type="chains" value="A/B/C/D=5-302"/>
</dbReference>
<dbReference type="PDB" id="3NEV">
    <property type="method" value="X-ray"/>
    <property type="resolution" value="2.19 A"/>
    <property type="chains" value="A/B/C/D=5-302"/>
</dbReference>
<dbReference type="PDB" id="4OE7">
    <property type="method" value="X-ray"/>
    <property type="resolution" value="1.99 A"/>
    <property type="chains" value="A/B/C/D=1-302"/>
</dbReference>
<dbReference type="PDB" id="4ONV">
    <property type="method" value="X-ray"/>
    <property type="resolution" value="2.57 A"/>
    <property type="chains" value="A/B/C/D=1-302"/>
</dbReference>
<dbReference type="PDB" id="4PTN">
    <property type="method" value="X-ray"/>
    <property type="resolution" value="1.99 A"/>
    <property type="chains" value="A/B/C/D=1-302"/>
</dbReference>
<dbReference type="PDB" id="4U4M">
    <property type="method" value="X-ray"/>
    <property type="resolution" value="3.09 A"/>
    <property type="chains" value="A/B/C/D=5-302"/>
</dbReference>
<dbReference type="PDBsum" id="2V8Z"/>
<dbReference type="PDBsum" id="2V9D"/>
<dbReference type="PDBsum" id="3N2X"/>
<dbReference type="PDBsum" id="3NEV"/>
<dbReference type="PDBsum" id="4OE7"/>
<dbReference type="PDBsum" id="4ONV"/>
<dbReference type="PDBsum" id="4PTN"/>
<dbReference type="PDBsum" id="4U4M"/>
<dbReference type="SMR" id="P75682"/>
<dbReference type="BioGRID" id="4261826">
    <property type="interactions" value="10"/>
</dbReference>
<dbReference type="DIP" id="DIP-11232N"/>
<dbReference type="FunCoup" id="P75682">
    <property type="interactions" value="432"/>
</dbReference>
<dbReference type="IntAct" id="P75682">
    <property type="interactions" value="3"/>
</dbReference>
<dbReference type="STRING" id="511145.b0268"/>
<dbReference type="jPOST" id="P75682"/>
<dbReference type="PaxDb" id="511145-b0268"/>
<dbReference type="EnsemblBacteria" id="AAC73371">
    <property type="protein sequence ID" value="AAC73371"/>
    <property type="gene ID" value="b0268"/>
</dbReference>
<dbReference type="GeneID" id="944925"/>
<dbReference type="KEGG" id="ecj:JW0261"/>
<dbReference type="KEGG" id="eco:b0268"/>
<dbReference type="KEGG" id="ecoc:C3026_01300"/>
<dbReference type="PATRIC" id="fig|1411691.4.peg.2012"/>
<dbReference type="EchoBASE" id="EB3128"/>
<dbReference type="eggNOG" id="COG0329">
    <property type="taxonomic scope" value="Bacteria"/>
</dbReference>
<dbReference type="HOGENOM" id="CLU_049343_5_1_6"/>
<dbReference type="InParanoid" id="P75682"/>
<dbReference type="OMA" id="FHFAMNE"/>
<dbReference type="OrthoDB" id="199953at2"/>
<dbReference type="PhylomeDB" id="P75682"/>
<dbReference type="BioCyc" id="EcoCyc:G6140-MONOMER"/>
<dbReference type="BioCyc" id="MetaCyc:G6140-MONOMER"/>
<dbReference type="BRENDA" id="4.1.2.20">
    <property type="organism ID" value="2026"/>
</dbReference>
<dbReference type="EvolutionaryTrace" id="P75682"/>
<dbReference type="PRO" id="PR:P75682"/>
<dbReference type="Proteomes" id="UP000000625">
    <property type="component" value="Chromosome"/>
</dbReference>
<dbReference type="GO" id="GO:0005829">
    <property type="term" value="C:cytosol"/>
    <property type="evidence" value="ECO:0000318"/>
    <property type="project" value="GO_Central"/>
</dbReference>
<dbReference type="GO" id="GO:0061677">
    <property type="term" value="F:2-dehydro-3-deoxy-D-gluconate aldolase activity"/>
    <property type="evidence" value="ECO:0007669"/>
    <property type="project" value="UniProtKB-EC"/>
</dbReference>
<dbReference type="GO" id="GO:0047440">
    <property type="term" value="F:2-dehydro-3-deoxy-D-pentonate aldolase activity"/>
    <property type="evidence" value="ECO:0000269"/>
    <property type="project" value="EcoCyc"/>
</dbReference>
<dbReference type="GO" id="GO:0042802">
    <property type="term" value="F:identical protein binding"/>
    <property type="evidence" value="ECO:0000314"/>
    <property type="project" value="EcoCyc"/>
</dbReference>
<dbReference type="GO" id="GO:0046176">
    <property type="term" value="P:aldonic acid catabolic process"/>
    <property type="evidence" value="ECO:0000315"/>
    <property type="project" value="EcoCyc"/>
</dbReference>
<dbReference type="CDD" id="cd00408">
    <property type="entry name" value="DHDPS-like"/>
    <property type="match status" value="1"/>
</dbReference>
<dbReference type="FunFam" id="3.20.20.70:FF:000269">
    <property type="entry name" value="Putative 2-dehydro-3-deoxy-D-gluconate aldolase YagE"/>
    <property type="match status" value="1"/>
</dbReference>
<dbReference type="Gene3D" id="3.20.20.70">
    <property type="entry name" value="Aldolase class I"/>
    <property type="match status" value="1"/>
</dbReference>
<dbReference type="InterPro" id="IPR013785">
    <property type="entry name" value="Aldolase_TIM"/>
</dbReference>
<dbReference type="InterPro" id="IPR002220">
    <property type="entry name" value="DapA-like"/>
</dbReference>
<dbReference type="InterPro" id="IPR020625">
    <property type="entry name" value="Schiff_base-form_aldolases_AS"/>
</dbReference>
<dbReference type="InterPro" id="IPR020624">
    <property type="entry name" value="Schiff_base-form_aldolases_CS"/>
</dbReference>
<dbReference type="PANTHER" id="PTHR12128:SF28">
    <property type="entry name" value="2-DEHYDRO-3-DEOXY-D-GLUCONATE ALDOLASE YAGE-RELATED"/>
    <property type="match status" value="1"/>
</dbReference>
<dbReference type="PANTHER" id="PTHR12128">
    <property type="entry name" value="DIHYDRODIPICOLINATE SYNTHASE"/>
    <property type="match status" value="1"/>
</dbReference>
<dbReference type="Pfam" id="PF00701">
    <property type="entry name" value="DHDPS"/>
    <property type="match status" value="1"/>
</dbReference>
<dbReference type="PIRSF" id="PIRSF001365">
    <property type="entry name" value="DHDPS"/>
    <property type="match status" value="1"/>
</dbReference>
<dbReference type="PRINTS" id="PR00146">
    <property type="entry name" value="DHPICSNTHASE"/>
</dbReference>
<dbReference type="SMART" id="SM01130">
    <property type="entry name" value="DHDPS"/>
    <property type="match status" value="1"/>
</dbReference>
<dbReference type="SUPFAM" id="SSF51569">
    <property type="entry name" value="Aldolase"/>
    <property type="match status" value="1"/>
</dbReference>
<dbReference type="PROSITE" id="PS00665">
    <property type="entry name" value="DHDPS_1"/>
    <property type="match status" value="1"/>
</dbReference>
<dbReference type="PROSITE" id="PS00666">
    <property type="entry name" value="DHDPS_2"/>
    <property type="match status" value="1"/>
</dbReference>
<organism>
    <name type="scientific">Escherichia coli (strain K12)</name>
    <dbReference type="NCBI Taxonomy" id="83333"/>
    <lineage>
        <taxon>Bacteria</taxon>
        <taxon>Pseudomonadati</taxon>
        <taxon>Pseudomonadota</taxon>
        <taxon>Gammaproteobacteria</taxon>
        <taxon>Enterobacterales</taxon>
        <taxon>Enterobacteriaceae</taxon>
        <taxon>Escherichia</taxon>
    </lineage>
</organism>
<evidence type="ECO:0000269" key="1">
    <source>
    </source>
</evidence>
<evidence type="ECO:0000269" key="2">
    <source>
    </source>
</evidence>
<evidence type="ECO:0000269" key="3">
    <source>
    </source>
</evidence>
<evidence type="ECO:0000269" key="4">
    <source>
    </source>
</evidence>
<evidence type="ECO:0000305" key="5"/>
<evidence type="ECO:0000305" key="6">
    <source>
    </source>
</evidence>
<evidence type="ECO:0000305" key="7">
    <source>
    </source>
</evidence>
<evidence type="ECO:0007829" key="8">
    <source>
        <dbReference type="PDB" id="2V9D"/>
    </source>
</evidence>
<evidence type="ECO:0007829" key="9">
    <source>
        <dbReference type="PDB" id="4OE7"/>
    </source>
</evidence>